<sequence length="277" mass="29891">MALKHFKPVTASLRGTVLVDRSELWKGKPVKGLTEGLTSSGGRNNHGRTTVRFRGGGHKRAYRVVDFKRRKFDVAATVERLEYDPNRSAFLALVKYEDGELAYILAPQRLKVGDQVVAGVKVDVKPGNAMPLSAIPVGTIVHNIELKAGAGGKLARSAGTFAQLVGKDQGYAQVKLMSGELRLIRGECMASIGAVSNPDHSNQQLGKAGRKRWLGRRPHNRGVAMNPVDHPLGGGEGRTSGGRNPVTPWGKPTKGAKTRANKRTDGLIIRRRKVGKG</sequence>
<gene>
    <name evidence="1" type="primary">rplB</name>
    <name type="ordered locus">Acry_1943</name>
</gene>
<feature type="chain" id="PRO_0000309856" description="Large ribosomal subunit protein uL2">
    <location>
        <begin position="1"/>
        <end position="277"/>
    </location>
</feature>
<feature type="region of interest" description="Disordered" evidence="2">
    <location>
        <begin position="216"/>
        <end position="277"/>
    </location>
</feature>
<reference key="1">
    <citation type="submission" date="2007-05" db="EMBL/GenBank/DDBJ databases">
        <title>Complete sequence of chromosome of Acidiphilium cryptum JF-5.</title>
        <authorList>
            <consortium name="US DOE Joint Genome Institute"/>
            <person name="Copeland A."/>
            <person name="Lucas S."/>
            <person name="Lapidus A."/>
            <person name="Barry K."/>
            <person name="Detter J.C."/>
            <person name="Glavina del Rio T."/>
            <person name="Hammon N."/>
            <person name="Israni S."/>
            <person name="Dalin E."/>
            <person name="Tice H."/>
            <person name="Pitluck S."/>
            <person name="Sims D."/>
            <person name="Brettin T."/>
            <person name="Bruce D."/>
            <person name="Han C."/>
            <person name="Schmutz J."/>
            <person name="Larimer F."/>
            <person name="Land M."/>
            <person name="Hauser L."/>
            <person name="Kyrpides N."/>
            <person name="Kim E."/>
            <person name="Magnuson T."/>
            <person name="Richardson P."/>
        </authorList>
    </citation>
    <scope>NUCLEOTIDE SEQUENCE [LARGE SCALE GENOMIC DNA]</scope>
    <source>
        <strain>JF-5</strain>
    </source>
</reference>
<protein>
    <recommendedName>
        <fullName evidence="1">Large ribosomal subunit protein uL2</fullName>
    </recommendedName>
    <alternativeName>
        <fullName evidence="3">50S ribosomal protein L2</fullName>
    </alternativeName>
</protein>
<proteinExistence type="inferred from homology"/>
<comment type="function">
    <text evidence="1">One of the primary rRNA binding proteins. Required for association of the 30S and 50S subunits to form the 70S ribosome, for tRNA binding and peptide bond formation. It has been suggested to have peptidyltransferase activity; this is somewhat controversial. Makes several contacts with the 16S rRNA in the 70S ribosome.</text>
</comment>
<comment type="subunit">
    <text evidence="1">Part of the 50S ribosomal subunit. Forms a bridge to the 30S subunit in the 70S ribosome.</text>
</comment>
<comment type="similarity">
    <text evidence="1">Belongs to the universal ribosomal protein uL2 family.</text>
</comment>
<accession>A5FZW2</accession>
<organism>
    <name type="scientific">Acidiphilium cryptum (strain JF-5)</name>
    <dbReference type="NCBI Taxonomy" id="349163"/>
    <lineage>
        <taxon>Bacteria</taxon>
        <taxon>Pseudomonadati</taxon>
        <taxon>Pseudomonadota</taxon>
        <taxon>Alphaproteobacteria</taxon>
        <taxon>Acetobacterales</taxon>
        <taxon>Acidocellaceae</taxon>
        <taxon>Acidiphilium</taxon>
    </lineage>
</organism>
<evidence type="ECO:0000255" key="1">
    <source>
        <dbReference type="HAMAP-Rule" id="MF_01320"/>
    </source>
</evidence>
<evidence type="ECO:0000256" key="2">
    <source>
        <dbReference type="SAM" id="MobiDB-lite"/>
    </source>
</evidence>
<evidence type="ECO:0000305" key="3"/>
<dbReference type="EMBL" id="CP000697">
    <property type="protein sequence ID" value="ABQ31144.1"/>
    <property type="molecule type" value="Genomic_DNA"/>
</dbReference>
<dbReference type="RefSeq" id="WP_007424176.1">
    <property type="nucleotide sequence ID" value="NC_009484.1"/>
</dbReference>
<dbReference type="SMR" id="A5FZW2"/>
<dbReference type="STRING" id="349163.Acry_1943"/>
<dbReference type="KEGG" id="acr:Acry_1943"/>
<dbReference type="eggNOG" id="COG0090">
    <property type="taxonomic scope" value="Bacteria"/>
</dbReference>
<dbReference type="HOGENOM" id="CLU_036235_2_1_5"/>
<dbReference type="Proteomes" id="UP000000245">
    <property type="component" value="Chromosome"/>
</dbReference>
<dbReference type="GO" id="GO:0015934">
    <property type="term" value="C:large ribosomal subunit"/>
    <property type="evidence" value="ECO:0007669"/>
    <property type="project" value="InterPro"/>
</dbReference>
<dbReference type="GO" id="GO:0019843">
    <property type="term" value="F:rRNA binding"/>
    <property type="evidence" value="ECO:0007669"/>
    <property type="project" value="UniProtKB-UniRule"/>
</dbReference>
<dbReference type="GO" id="GO:0003735">
    <property type="term" value="F:structural constituent of ribosome"/>
    <property type="evidence" value="ECO:0007669"/>
    <property type="project" value="InterPro"/>
</dbReference>
<dbReference type="GO" id="GO:0016740">
    <property type="term" value="F:transferase activity"/>
    <property type="evidence" value="ECO:0007669"/>
    <property type="project" value="InterPro"/>
</dbReference>
<dbReference type="GO" id="GO:0002181">
    <property type="term" value="P:cytoplasmic translation"/>
    <property type="evidence" value="ECO:0007669"/>
    <property type="project" value="TreeGrafter"/>
</dbReference>
<dbReference type="FunFam" id="2.30.30.30:FF:000001">
    <property type="entry name" value="50S ribosomal protein L2"/>
    <property type="match status" value="1"/>
</dbReference>
<dbReference type="FunFam" id="2.40.50.140:FF:000003">
    <property type="entry name" value="50S ribosomal protein L2"/>
    <property type="match status" value="1"/>
</dbReference>
<dbReference type="FunFam" id="4.10.950.10:FF:000001">
    <property type="entry name" value="50S ribosomal protein L2"/>
    <property type="match status" value="1"/>
</dbReference>
<dbReference type="Gene3D" id="2.30.30.30">
    <property type="match status" value="1"/>
</dbReference>
<dbReference type="Gene3D" id="2.40.50.140">
    <property type="entry name" value="Nucleic acid-binding proteins"/>
    <property type="match status" value="1"/>
</dbReference>
<dbReference type="Gene3D" id="4.10.950.10">
    <property type="entry name" value="Ribosomal protein L2, domain 3"/>
    <property type="match status" value="1"/>
</dbReference>
<dbReference type="HAMAP" id="MF_01320_B">
    <property type="entry name" value="Ribosomal_uL2_B"/>
    <property type="match status" value="1"/>
</dbReference>
<dbReference type="InterPro" id="IPR012340">
    <property type="entry name" value="NA-bd_OB-fold"/>
</dbReference>
<dbReference type="InterPro" id="IPR014722">
    <property type="entry name" value="Rib_uL2_dom2"/>
</dbReference>
<dbReference type="InterPro" id="IPR002171">
    <property type="entry name" value="Ribosomal_uL2"/>
</dbReference>
<dbReference type="InterPro" id="IPR005880">
    <property type="entry name" value="Ribosomal_uL2_bac/org-type"/>
</dbReference>
<dbReference type="InterPro" id="IPR022669">
    <property type="entry name" value="Ribosomal_uL2_C"/>
</dbReference>
<dbReference type="InterPro" id="IPR022671">
    <property type="entry name" value="Ribosomal_uL2_CS"/>
</dbReference>
<dbReference type="InterPro" id="IPR014726">
    <property type="entry name" value="Ribosomal_uL2_dom3"/>
</dbReference>
<dbReference type="InterPro" id="IPR022666">
    <property type="entry name" value="Ribosomal_uL2_RNA-bd_dom"/>
</dbReference>
<dbReference type="InterPro" id="IPR008991">
    <property type="entry name" value="Translation_prot_SH3-like_sf"/>
</dbReference>
<dbReference type="NCBIfam" id="TIGR01171">
    <property type="entry name" value="rplB_bact"/>
    <property type="match status" value="1"/>
</dbReference>
<dbReference type="PANTHER" id="PTHR13691:SF5">
    <property type="entry name" value="LARGE RIBOSOMAL SUBUNIT PROTEIN UL2M"/>
    <property type="match status" value="1"/>
</dbReference>
<dbReference type="PANTHER" id="PTHR13691">
    <property type="entry name" value="RIBOSOMAL PROTEIN L2"/>
    <property type="match status" value="1"/>
</dbReference>
<dbReference type="Pfam" id="PF00181">
    <property type="entry name" value="Ribosomal_L2"/>
    <property type="match status" value="1"/>
</dbReference>
<dbReference type="Pfam" id="PF03947">
    <property type="entry name" value="Ribosomal_L2_C"/>
    <property type="match status" value="1"/>
</dbReference>
<dbReference type="PIRSF" id="PIRSF002158">
    <property type="entry name" value="Ribosomal_L2"/>
    <property type="match status" value="1"/>
</dbReference>
<dbReference type="SMART" id="SM01383">
    <property type="entry name" value="Ribosomal_L2"/>
    <property type="match status" value="1"/>
</dbReference>
<dbReference type="SMART" id="SM01382">
    <property type="entry name" value="Ribosomal_L2_C"/>
    <property type="match status" value="1"/>
</dbReference>
<dbReference type="SUPFAM" id="SSF50249">
    <property type="entry name" value="Nucleic acid-binding proteins"/>
    <property type="match status" value="1"/>
</dbReference>
<dbReference type="SUPFAM" id="SSF50104">
    <property type="entry name" value="Translation proteins SH3-like domain"/>
    <property type="match status" value="1"/>
</dbReference>
<dbReference type="PROSITE" id="PS00467">
    <property type="entry name" value="RIBOSOMAL_L2"/>
    <property type="match status" value="1"/>
</dbReference>
<name>RL2_ACICJ</name>
<keyword id="KW-1185">Reference proteome</keyword>
<keyword id="KW-0687">Ribonucleoprotein</keyword>
<keyword id="KW-0689">Ribosomal protein</keyword>
<keyword id="KW-0694">RNA-binding</keyword>
<keyword id="KW-0699">rRNA-binding</keyword>